<evidence type="ECO:0000250" key="1"/>
<evidence type="ECO:0000255" key="2"/>
<evidence type="ECO:0000305" key="3"/>
<dbReference type="EC" id="1.1.1.9"/>
<dbReference type="EMBL" id="DS027053">
    <property type="protein sequence ID" value="EAW10868.1"/>
    <property type="status" value="ALT_SEQ"/>
    <property type="molecule type" value="Genomic_DNA"/>
</dbReference>
<dbReference type="RefSeq" id="XP_001272294.1">
    <property type="nucleotide sequence ID" value="XM_001272293.1"/>
</dbReference>
<dbReference type="SMR" id="A1CFY8"/>
<dbReference type="STRING" id="344612.A1CFY8"/>
<dbReference type="GeneID" id="4704682"/>
<dbReference type="KEGG" id="act:ACLA_065000"/>
<dbReference type="eggNOG" id="KOG0024">
    <property type="taxonomic scope" value="Eukaryota"/>
</dbReference>
<dbReference type="OrthoDB" id="3941538at2759"/>
<dbReference type="UniPathway" id="UPA00146">
    <property type="reaction ID" value="UER00577"/>
</dbReference>
<dbReference type="Proteomes" id="UP000006701">
    <property type="component" value="Unassembled WGS sequence"/>
</dbReference>
<dbReference type="GO" id="GO:0046526">
    <property type="term" value="F:D-xylulose reductase activity"/>
    <property type="evidence" value="ECO:0007669"/>
    <property type="project" value="UniProtKB-EC"/>
</dbReference>
<dbReference type="GO" id="GO:0003939">
    <property type="term" value="F:L-iditol 2-dehydrogenase (NAD+) activity"/>
    <property type="evidence" value="ECO:0007669"/>
    <property type="project" value="TreeGrafter"/>
</dbReference>
<dbReference type="GO" id="GO:0008270">
    <property type="term" value="F:zinc ion binding"/>
    <property type="evidence" value="ECO:0007669"/>
    <property type="project" value="InterPro"/>
</dbReference>
<dbReference type="GO" id="GO:0042732">
    <property type="term" value="P:D-xylose metabolic process"/>
    <property type="evidence" value="ECO:0007669"/>
    <property type="project" value="UniProtKB-KW"/>
</dbReference>
<dbReference type="GO" id="GO:0019569">
    <property type="term" value="P:L-arabinose catabolic process to xylulose 5-phosphate"/>
    <property type="evidence" value="ECO:0007669"/>
    <property type="project" value="UniProtKB-UniPathway"/>
</dbReference>
<dbReference type="GO" id="GO:0006062">
    <property type="term" value="P:sorbitol catabolic process"/>
    <property type="evidence" value="ECO:0007669"/>
    <property type="project" value="TreeGrafter"/>
</dbReference>
<dbReference type="CDD" id="cd05285">
    <property type="entry name" value="sorbitol_DH"/>
    <property type="match status" value="1"/>
</dbReference>
<dbReference type="FunFam" id="3.40.50.720:FF:000068">
    <property type="entry name" value="Sorbitol dehydrogenase"/>
    <property type="match status" value="1"/>
</dbReference>
<dbReference type="Gene3D" id="3.90.180.10">
    <property type="entry name" value="Medium-chain alcohol dehydrogenases, catalytic domain"/>
    <property type="match status" value="1"/>
</dbReference>
<dbReference type="Gene3D" id="3.40.50.720">
    <property type="entry name" value="NAD(P)-binding Rossmann-like Domain"/>
    <property type="match status" value="1"/>
</dbReference>
<dbReference type="InterPro" id="IPR013149">
    <property type="entry name" value="ADH-like_C"/>
</dbReference>
<dbReference type="InterPro" id="IPR013154">
    <property type="entry name" value="ADH-like_N"/>
</dbReference>
<dbReference type="InterPro" id="IPR002328">
    <property type="entry name" value="ADH_Zn_CS"/>
</dbReference>
<dbReference type="InterPro" id="IPR011032">
    <property type="entry name" value="GroES-like_sf"/>
</dbReference>
<dbReference type="InterPro" id="IPR036291">
    <property type="entry name" value="NAD(P)-bd_dom_sf"/>
</dbReference>
<dbReference type="InterPro" id="IPR020843">
    <property type="entry name" value="PKS_ER"/>
</dbReference>
<dbReference type="InterPro" id="IPR045306">
    <property type="entry name" value="SDH-like"/>
</dbReference>
<dbReference type="PANTHER" id="PTHR43161">
    <property type="entry name" value="SORBITOL DEHYDROGENASE"/>
    <property type="match status" value="1"/>
</dbReference>
<dbReference type="PANTHER" id="PTHR43161:SF9">
    <property type="entry name" value="SORBITOL DEHYDROGENASE"/>
    <property type="match status" value="1"/>
</dbReference>
<dbReference type="Pfam" id="PF08240">
    <property type="entry name" value="ADH_N"/>
    <property type="match status" value="1"/>
</dbReference>
<dbReference type="Pfam" id="PF00107">
    <property type="entry name" value="ADH_zinc_N"/>
    <property type="match status" value="1"/>
</dbReference>
<dbReference type="SMART" id="SM00829">
    <property type="entry name" value="PKS_ER"/>
    <property type="match status" value="1"/>
</dbReference>
<dbReference type="SUPFAM" id="SSF50129">
    <property type="entry name" value="GroES-like"/>
    <property type="match status" value="1"/>
</dbReference>
<dbReference type="SUPFAM" id="SSF51735">
    <property type="entry name" value="NAD(P)-binding Rossmann-fold domains"/>
    <property type="match status" value="1"/>
</dbReference>
<dbReference type="PROSITE" id="PS00059">
    <property type="entry name" value="ADH_ZINC"/>
    <property type="match status" value="1"/>
</dbReference>
<gene>
    <name type="primary">xdhA</name>
    <name type="ORF">ACLA_065000</name>
</gene>
<sequence>MATSSTTPQNLSFVLEGIHQVKFEDRPIPELRDPHDVIVNVKYTGICGSDVHYWEHGAIGHFVVKDPMVLGHESSGVVAKVGSAVTSLKVGDRVAMEPGVPCRRCEPCKAGKYNLCEKMAFAATPPYDGTLAKYYPLPEDFCYKLPENISLQEGALMEPLGVAVHITRQASIKPGESVVVFGAGPVGLLCCAVARAFGASKIIAVDIQKTRLDFAKKYAATAIFEPAKVSAVANADQMREENDLGPGADVVIDASGAEPSVHTGIHVLRPGGTYVQGGMGRNEINFPIMAACTKELTIKGSFRYGSGDYKLAVDLVASGKVNVKDLITGVVEFQEAEQAFKEVKAGKGIKTLIAGVRD</sequence>
<protein>
    <recommendedName>
        <fullName>Probable D-xylulose reductase A</fullName>
        <ecNumber>1.1.1.9</ecNumber>
    </recommendedName>
    <alternativeName>
        <fullName>Xylitol dehydrogenase A</fullName>
    </alternativeName>
</protein>
<feature type="chain" id="PRO_0000393506" description="Probable D-xylulose reductase A">
    <location>
        <begin position="1"/>
        <end position="358"/>
    </location>
</feature>
<feature type="binding site" evidence="1">
    <location>
        <position position="47"/>
    </location>
    <ligand>
        <name>Zn(2+)</name>
        <dbReference type="ChEBI" id="CHEBI:29105"/>
        <note>catalytic</note>
    </ligand>
</feature>
<feature type="binding site" evidence="1">
    <location>
        <position position="72"/>
    </location>
    <ligand>
        <name>Zn(2+)</name>
        <dbReference type="ChEBI" id="CHEBI:29105"/>
        <note>catalytic</note>
    </ligand>
</feature>
<feature type="binding site" evidence="1">
    <location>
        <position position="73"/>
    </location>
    <ligand>
        <name>Zn(2+)</name>
        <dbReference type="ChEBI" id="CHEBI:29105"/>
        <note>catalytic</note>
    </ligand>
</feature>
<feature type="binding site" evidence="2">
    <location>
        <begin position="182"/>
        <end position="187"/>
    </location>
    <ligand>
        <name>NAD(+)</name>
        <dbReference type="ChEBI" id="CHEBI:57540"/>
    </ligand>
</feature>
<proteinExistence type="inferred from homology"/>
<name>XYL2_ASPCL</name>
<comment type="function">
    <text evidence="1">Xylitol dehydrogenase which catalyzes the conversion of xylitol to D-xylulose. Xylose is a major component of hemicelluloses such as xylan. Most fungi utilize D-xylose via three enzymatic reactions, xylose reductase (XR), xylitol dehydrogenase (XDH), and xylulokinase, to form xylulose 5-phosphate, which enters pentose phosphate pathway (By similarity).</text>
</comment>
<comment type="catalytic activity">
    <reaction>
        <text>xylitol + NAD(+) = D-xylulose + NADH + H(+)</text>
        <dbReference type="Rhea" id="RHEA:20433"/>
        <dbReference type="ChEBI" id="CHEBI:15378"/>
        <dbReference type="ChEBI" id="CHEBI:17140"/>
        <dbReference type="ChEBI" id="CHEBI:17151"/>
        <dbReference type="ChEBI" id="CHEBI:57540"/>
        <dbReference type="ChEBI" id="CHEBI:57945"/>
        <dbReference type="EC" id="1.1.1.9"/>
    </reaction>
</comment>
<comment type="cofactor">
    <cofactor evidence="1">
        <name>Zn(2+)</name>
        <dbReference type="ChEBI" id="CHEBI:29105"/>
    </cofactor>
    <text evidence="1">Binds 1 zinc ion per subunit.</text>
</comment>
<comment type="pathway">
    <text>Carbohydrate degradation; L-arabinose degradation via L-arabinitol; D-xylulose 5-phosphate from L-arabinose (fungal route): step 4/5.</text>
</comment>
<comment type="similarity">
    <text evidence="3">Belongs to the zinc-containing alcohol dehydrogenase family.</text>
</comment>
<comment type="sequence caution" evidence="3">
    <conflict type="erroneous gene model prediction">
        <sequence resource="EMBL-CDS" id="EAW10868"/>
    </conflict>
</comment>
<reference key="1">
    <citation type="journal article" date="2008" name="PLoS Genet.">
        <title>Genomic islands in the pathogenic filamentous fungus Aspergillus fumigatus.</title>
        <authorList>
            <person name="Fedorova N.D."/>
            <person name="Khaldi N."/>
            <person name="Joardar V.S."/>
            <person name="Maiti R."/>
            <person name="Amedeo P."/>
            <person name="Anderson M.J."/>
            <person name="Crabtree J."/>
            <person name="Silva J.C."/>
            <person name="Badger J.H."/>
            <person name="Albarraq A."/>
            <person name="Angiuoli S."/>
            <person name="Bussey H."/>
            <person name="Bowyer P."/>
            <person name="Cotty P.J."/>
            <person name="Dyer P.S."/>
            <person name="Egan A."/>
            <person name="Galens K."/>
            <person name="Fraser-Liggett C.M."/>
            <person name="Haas B.J."/>
            <person name="Inman J.M."/>
            <person name="Kent R."/>
            <person name="Lemieux S."/>
            <person name="Malavazi I."/>
            <person name="Orvis J."/>
            <person name="Roemer T."/>
            <person name="Ronning C.M."/>
            <person name="Sundaram J.P."/>
            <person name="Sutton G."/>
            <person name="Turner G."/>
            <person name="Venter J.C."/>
            <person name="White O.R."/>
            <person name="Whitty B.R."/>
            <person name="Youngman P."/>
            <person name="Wolfe K.H."/>
            <person name="Goldman G.H."/>
            <person name="Wortman J.R."/>
            <person name="Jiang B."/>
            <person name="Denning D.W."/>
            <person name="Nierman W.C."/>
        </authorList>
    </citation>
    <scope>NUCLEOTIDE SEQUENCE [LARGE SCALE GENOMIC DNA]</scope>
    <source>
        <strain>ATCC 1007 / CBS 513.65 / DSM 816 / NCTC 3887 / NRRL 1 / QM 1276 / 107</strain>
    </source>
</reference>
<keyword id="KW-0119">Carbohydrate metabolism</keyword>
<keyword id="KW-0479">Metal-binding</keyword>
<keyword id="KW-0520">NAD</keyword>
<keyword id="KW-0560">Oxidoreductase</keyword>
<keyword id="KW-1185">Reference proteome</keyword>
<keyword id="KW-0859">Xylose metabolism</keyword>
<keyword id="KW-0862">Zinc</keyword>
<accession>A1CFY8</accession>
<organism>
    <name type="scientific">Aspergillus clavatus (strain ATCC 1007 / CBS 513.65 / DSM 816 / NCTC 3887 / NRRL 1 / QM 1276 / 107)</name>
    <dbReference type="NCBI Taxonomy" id="344612"/>
    <lineage>
        <taxon>Eukaryota</taxon>
        <taxon>Fungi</taxon>
        <taxon>Dikarya</taxon>
        <taxon>Ascomycota</taxon>
        <taxon>Pezizomycotina</taxon>
        <taxon>Eurotiomycetes</taxon>
        <taxon>Eurotiomycetidae</taxon>
        <taxon>Eurotiales</taxon>
        <taxon>Aspergillaceae</taxon>
        <taxon>Aspergillus</taxon>
        <taxon>Aspergillus subgen. Fumigati</taxon>
    </lineage>
</organism>